<organism>
    <name type="scientific">Streptococcus uberis (strain ATCC BAA-854 / 0140J)</name>
    <dbReference type="NCBI Taxonomy" id="218495"/>
    <lineage>
        <taxon>Bacteria</taxon>
        <taxon>Bacillati</taxon>
        <taxon>Bacillota</taxon>
        <taxon>Bacilli</taxon>
        <taxon>Lactobacillales</taxon>
        <taxon>Streptococcaceae</taxon>
        <taxon>Streptococcus</taxon>
    </lineage>
</organism>
<proteinExistence type="inferred from homology"/>
<reference key="1">
    <citation type="journal article" date="2009" name="BMC Genomics">
        <title>Evidence for niche adaptation in the genome of the bovine pathogen Streptococcus uberis.</title>
        <authorList>
            <person name="Ward P.N."/>
            <person name="Holden M.T.G."/>
            <person name="Leigh J.A."/>
            <person name="Lennard N."/>
            <person name="Bignell A."/>
            <person name="Barron A."/>
            <person name="Clark L."/>
            <person name="Quail M.A."/>
            <person name="Woodward J."/>
            <person name="Barrell B.G."/>
            <person name="Egan S.A."/>
            <person name="Field T.R."/>
            <person name="Maskell D."/>
            <person name="Kehoe M."/>
            <person name="Dowson C.G."/>
            <person name="Chanter N."/>
            <person name="Whatmore A.M."/>
            <person name="Bentley S.D."/>
            <person name="Parkhill J."/>
        </authorList>
    </citation>
    <scope>NUCLEOTIDE SEQUENCE [LARGE SCALE GENOMIC DNA]</scope>
    <source>
        <strain>ATCC BAA-854 / 0140J</strain>
    </source>
</reference>
<keyword id="KW-0067">ATP-binding</keyword>
<keyword id="KW-0436">Ligase</keyword>
<keyword id="KW-0547">Nucleotide-binding</keyword>
<keyword id="KW-0554">One-carbon metabolism</keyword>
<keyword id="KW-1185">Reference proteome</keyword>
<gene>
    <name evidence="1" type="primary">fhs</name>
    <name type="ordered locus">SUB0942</name>
</gene>
<feature type="chain" id="PRO_1000185267" description="Formate--tetrahydrofolate ligase">
    <location>
        <begin position="1"/>
        <end position="556"/>
    </location>
</feature>
<feature type="binding site" evidence="1">
    <location>
        <begin position="65"/>
        <end position="72"/>
    </location>
    <ligand>
        <name>ATP</name>
        <dbReference type="ChEBI" id="CHEBI:30616"/>
    </ligand>
</feature>
<protein>
    <recommendedName>
        <fullName evidence="1">Formate--tetrahydrofolate ligase</fullName>
        <ecNumber evidence="1">6.3.4.3</ecNumber>
    </recommendedName>
    <alternativeName>
        <fullName evidence="1">Formyltetrahydrofolate synthetase</fullName>
        <shortName evidence="1">FHS</shortName>
        <shortName evidence="1">FTHFS</shortName>
    </alternativeName>
</protein>
<accession>B9DS83</accession>
<dbReference type="EC" id="6.3.4.3" evidence="1"/>
<dbReference type="EMBL" id="AM946015">
    <property type="protein sequence ID" value="CAR42098.1"/>
    <property type="molecule type" value="Genomic_DNA"/>
</dbReference>
<dbReference type="RefSeq" id="WP_012658441.1">
    <property type="nucleotide sequence ID" value="NC_012004.1"/>
</dbReference>
<dbReference type="SMR" id="B9DS83"/>
<dbReference type="STRING" id="218495.SUB0942"/>
<dbReference type="KEGG" id="sub:SUB0942"/>
<dbReference type="eggNOG" id="COG2759">
    <property type="taxonomic scope" value="Bacteria"/>
</dbReference>
<dbReference type="HOGENOM" id="CLU_003601_3_3_9"/>
<dbReference type="OrthoDB" id="9761733at2"/>
<dbReference type="UniPathway" id="UPA00193"/>
<dbReference type="Proteomes" id="UP000000449">
    <property type="component" value="Chromosome"/>
</dbReference>
<dbReference type="GO" id="GO:0005524">
    <property type="term" value="F:ATP binding"/>
    <property type="evidence" value="ECO:0007669"/>
    <property type="project" value="UniProtKB-UniRule"/>
</dbReference>
<dbReference type="GO" id="GO:0004329">
    <property type="term" value="F:formate-tetrahydrofolate ligase activity"/>
    <property type="evidence" value="ECO:0007669"/>
    <property type="project" value="UniProtKB-UniRule"/>
</dbReference>
<dbReference type="GO" id="GO:0035999">
    <property type="term" value="P:tetrahydrofolate interconversion"/>
    <property type="evidence" value="ECO:0007669"/>
    <property type="project" value="UniProtKB-UniRule"/>
</dbReference>
<dbReference type="CDD" id="cd00477">
    <property type="entry name" value="FTHFS"/>
    <property type="match status" value="1"/>
</dbReference>
<dbReference type="FunFam" id="3.30.1510.10:FF:000001">
    <property type="entry name" value="Formate--tetrahydrofolate ligase"/>
    <property type="match status" value="1"/>
</dbReference>
<dbReference type="FunFam" id="3.10.410.10:FF:000001">
    <property type="entry name" value="Putative formate--tetrahydrofolate ligase"/>
    <property type="match status" value="1"/>
</dbReference>
<dbReference type="Gene3D" id="3.30.1510.10">
    <property type="entry name" value="Domain 2, N(10)-formyltetrahydrofolate synthetase"/>
    <property type="match status" value="1"/>
</dbReference>
<dbReference type="Gene3D" id="3.10.410.10">
    <property type="entry name" value="Formyltetrahydrofolate synthetase, domain 3"/>
    <property type="match status" value="1"/>
</dbReference>
<dbReference type="Gene3D" id="3.40.50.300">
    <property type="entry name" value="P-loop containing nucleotide triphosphate hydrolases"/>
    <property type="match status" value="1"/>
</dbReference>
<dbReference type="HAMAP" id="MF_01543">
    <property type="entry name" value="FTHFS"/>
    <property type="match status" value="1"/>
</dbReference>
<dbReference type="InterPro" id="IPR000559">
    <property type="entry name" value="Formate_THF_ligase"/>
</dbReference>
<dbReference type="InterPro" id="IPR020628">
    <property type="entry name" value="Formate_THF_ligase_CS"/>
</dbReference>
<dbReference type="InterPro" id="IPR027417">
    <property type="entry name" value="P-loop_NTPase"/>
</dbReference>
<dbReference type="NCBIfam" id="NF010030">
    <property type="entry name" value="PRK13505.1"/>
    <property type="match status" value="1"/>
</dbReference>
<dbReference type="Pfam" id="PF01268">
    <property type="entry name" value="FTHFS"/>
    <property type="match status" value="1"/>
</dbReference>
<dbReference type="SUPFAM" id="SSF52540">
    <property type="entry name" value="P-loop containing nucleoside triphosphate hydrolases"/>
    <property type="match status" value="1"/>
</dbReference>
<dbReference type="PROSITE" id="PS00721">
    <property type="entry name" value="FTHFS_1"/>
    <property type="match status" value="1"/>
</dbReference>
<dbReference type="PROSITE" id="PS00722">
    <property type="entry name" value="FTHFS_2"/>
    <property type="match status" value="1"/>
</dbReference>
<evidence type="ECO:0000255" key="1">
    <source>
        <dbReference type="HAMAP-Rule" id="MF_01543"/>
    </source>
</evidence>
<sequence length="556" mass="59791">MKSDIEIAQSIALKPITEIVEKVGIAFDDIELYGKYKAKLSFDKINEVKSNPVGKLILVTAINPTPAGEGKSTMSIGLADALNKIGKKTMIALREPSLGPVMGIKGGAAGGGYAQVLPMEDINLHFTGDMHAITTANNALSALIDNHLQQGNELGIDQRRIIWKRVLDLNDRALRHVIVGLGSPVNGVPREDGFDITVASEIMAILCLATDLKDLKERLANIVVAYDYNRKPVYVRDLKVEGALTLILRDAIKPNLVQTIYGTPALVHGGPFANIAHGCNSVLATSTALRLADYTVTEAGFGADLGAEKFLDIKVPNLPTSPDAVVVVATLRALKMHGGVAKTDLNQENVEAVRAGFANLERHVNNMRQYGVPVVVAINEFVADTEAEIAVLKELCQSIDVPVELASVWANGAEGGVALAETVVKVIEQEKANYQRLYNDQDSVEEKVRKIVKNIYGGDAVQFSAKAKNQLKQFAEFGWDKLPVCMAKTQYSFSDNPNLLGAPSGFDITIREFVPKTGAGFIVALTGDVMTMPGLPKHPAALNMDVSEEGTAIGLF</sequence>
<comment type="catalytic activity">
    <reaction evidence="1">
        <text>(6S)-5,6,7,8-tetrahydrofolate + formate + ATP = (6R)-10-formyltetrahydrofolate + ADP + phosphate</text>
        <dbReference type="Rhea" id="RHEA:20221"/>
        <dbReference type="ChEBI" id="CHEBI:15740"/>
        <dbReference type="ChEBI" id="CHEBI:30616"/>
        <dbReference type="ChEBI" id="CHEBI:43474"/>
        <dbReference type="ChEBI" id="CHEBI:57453"/>
        <dbReference type="ChEBI" id="CHEBI:195366"/>
        <dbReference type="ChEBI" id="CHEBI:456216"/>
        <dbReference type="EC" id="6.3.4.3"/>
    </reaction>
</comment>
<comment type="pathway">
    <text evidence="1">One-carbon metabolism; tetrahydrofolate interconversion.</text>
</comment>
<comment type="similarity">
    <text evidence="1">Belongs to the formate--tetrahydrofolate ligase family.</text>
</comment>
<name>FTHS_STRU0</name>